<dbReference type="EC" id="2.7.1.30" evidence="1"/>
<dbReference type="EMBL" id="AE005176">
    <property type="protein sequence ID" value="AAK05344.1"/>
    <property type="molecule type" value="Genomic_DNA"/>
</dbReference>
<dbReference type="PIR" id="F86780">
    <property type="entry name" value="F86780"/>
</dbReference>
<dbReference type="RefSeq" id="NP_267402.1">
    <property type="nucleotide sequence ID" value="NC_002662.1"/>
</dbReference>
<dbReference type="RefSeq" id="WP_003131019.1">
    <property type="nucleotide sequence ID" value="NC_002662.1"/>
</dbReference>
<dbReference type="SMR" id="Q9CG64"/>
<dbReference type="PaxDb" id="272623-L0014"/>
<dbReference type="EnsemblBacteria" id="AAK05344">
    <property type="protein sequence ID" value="AAK05344"/>
    <property type="gene ID" value="L0014"/>
</dbReference>
<dbReference type="KEGG" id="lla:L0014"/>
<dbReference type="PATRIC" id="fig|272623.7.peg.1347"/>
<dbReference type="eggNOG" id="COG0554">
    <property type="taxonomic scope" value="Bacteria"/>
</dbReference>
<dbReference type="HOGENOM" id="CLU_009281_2_3_9"/>
<dbReference type="OrthoDB" id="9805576at2"/>
<dbReference type="UniPathway" id="UPA00618">
    <property type="reaction ID" value="UER00672"/>
</dbReference>
<dbReference type="Proteomes" id="UP000002196">
    <property type="component" value="Chromosome"/>
</dbReference>
<dbReference type="GO" id="GO:0005829">
    <property type="term" value="C:cytosol"/>
    <property type="evidence" value="ECO:0007669"/>
    <property type="project" value="TreeGrafter"/>
</dbReference>
<dbReference type="GO" id="GO:0005524">
    <property type="term" value="F:ATP binding"/>
    <property type="evidence" value="ECO:0007669"/>
    <property type="project" value="UniProtKB-UniRule"/>
</dbReference>
<dbReference type="GO" id="GO:0004370">
    <property type="term" value="F:glycerol kinase activity"/>
    <property type="evidence" value="ECO:0000250"/>
    <property type="project" value="UniProtKB"/>
</dbReference>
<dbReference type="GO" id="GO:0019563">
    <property type="term" value="P:glycerol catabolic process"/>
    <property type="evidence" value="ECO:0007669"/>
    <property type="project" value="UniProtKB-UniRule"/>
</dbReference>
<dbReference type="GO" id="GO:0006071">
    <property type="term" value="P:glycerol metabolic process"/>
    <property type="evidence" value="ECO:0000250"/>
    <property type="project" value="UniProtKB"/>
</dbReference>
<dbReference type="GO" id="GO:0006072">
    <property type="term" value="P:glycerol-3-phosphate metabolic process"/>
    <property type="evidence" value="ECO:0007669"/>
    <property type="project" value="InterPro"/>
</dbReference>
<dbReference type="CDD" id="cd07786">
    <property type="entry name" value="FGGY_EcGK_like"/>
    <property type="match status" value="1"/>
</dbReference>
<dbReference type="FunFam" id="3.30.420.40:FF:000007">
    <property type="entry name" value="Glycerol kinase"/>
    <property type="match status" value="1"/>
</dbReference>
<dbReference type="FunFam" id="3.30.420.40:FF:000008">
    <property type="entry name" value="Glycerol kinase"/>
    <property type="match status" value="1"/>
</dbReference>
<dbReference type="Gene3D" id="3.30.420.40">
    <property type="match status" value="2"/>
</dbReference>
<dbReference type="HAMAP" id="MF_00186">
    <property type="entry name" value="Glycerol_kin"/>
    <property type="match status" value="1"/>
</dbReference>
<dbReference type="InterPro" id="IPR043129">
    <property type="entry name" value="ATPase_NBD"/>
</dbReference>
<dbReference type="InterPro" id="IPR000577">
    <property type="entry name" value="Carb_kinase_FGGY"/>
</dbReference>
<dbReference type="InterPro" id="IPR018483">
    <property type="entry name" value="Carb_kinase_FGGY_CS"/>
</dbReference>
<dbReference type="InterPro" id="IPR018485">
    <property type="entry name" value="FGGY_C"/>
</dbReference>
<dbReference type="InterPro" id="IPR018484">
    <property type="entry name" value="FGGY_N"/>
</dbReference>
<dbReference type="InterPro" id="IPR005999">
    <property type="entry name" value="Glycerol_kin"/>
</dbReference>
<dbReference type="NCBIfam" id="TIGR01311">
    <property type="entry name" value="glycerol_kin"/>
    <property type="match status" value="1"/>
</dbReference>
<dbReference type="NCBIfam" id="NF000756">
    <property type="entry name" value="PRK00047.1"/>
    <property type="match status" value="1"/>
</dbReference>
<dbReference type="PANTHER" id="PTHR10196:SF69">
    <property type="entry name" value="GLYCEROL KINASE"/>
    <property type="match status" value="1"/>
</dbReference>
<dbReference type="PANTHER" id="PTHR10196">
    <property type="entry name" value="SUGAR KINASE"/>
    <property type="match status" value="1"/>
</dbReference>
<dbReference type="Pfam" id="PF02782">
    <property type="entry name" value="FGGY_C"/>
    <property type="match status" value="1"/>
</dbReference>
<dbReference type="Pfam" id="PF00370">
    <property type="entry name" value="FGGY_N"/>
    <property type="match status" value="1"/>
</dbReference>
<dbReference type="PIRSF" id="PIRSF000538">
    <property type="entry name" value="GlpK"/>
    <property type="match status" value="1"/>
</dbReference>
<dbReference type="SUPFAM" id="SSF53067">
    <property type="entry name" value="Actin-like ATPase domain"/>
    <property type="match status" value="2"/>
</dbReference>
<dbReference type="PROSITE" id="PS00933">
    <property type="entry name" value="FGGY_KINASES_1"/>
    <property type="match status" value="1"/>
</dbReference>
<dbReference type="PROSITE" id="PS00445">
    <property type="entry name" value="FGGY_KINASES_2"/>
    <property type="match status" value="1"/>
</dbReference>
<sequence length="498" mass="55445">MTETSYIMAIDQGTTSSRAIIFDKHGKHIGSSQKEFTQYFPKEGWVEHDANEIWNSVQSVIAGAFIESGIKPVQVAGIGITNQRETTIIWDKKTGKPIYHAIVWQSRQSADIANGLKEAGHEELFHKKTGLIVDSYFSATKIRWILDHVEGAQERAERGELLFGTIDTWLLWKLTDGDAHYTDYSNASRTMLYNIHELKWDEEILKILNIPASMLPEVKSNSEVYGVTKGFHFFGSEVPISGMAGDQQAALFGQMAFEPGMIKNTYGTGSFIVMNTGEKPHISKNNMLTTIGYGINGKVYYALEGSIFVAGSSIQWLRDGLKMLERASDSEEVALQSRSQDEVYVVPAFVGLGAPYWDQEARGAMFGLTRGTTKEDIVKATLQGIAYQVRDVVSTMKEDTGIDMSVLKVDGGAANNEYLMQFQADILNIPIQRAGDLETTALGAAFLAGLAVGFWKDLEELKESYEPGKIFQTQMQEERREELYAGWKKAVNATRAFK</sequence>
<feature type="chain" id="PRO_0000059459" description="Glycerol kinase">
    <location>
        <begin position="1"/>
        <end position="498"/>
    </location>
</feature>
<feature type="binding site" evidence="1">
    <location>
        <position position="14"/>
    </location>
    <ligand>
        <name>ADP</name>
        <dbReference type="ChEBI" id="CHEBI:456216"/>
    </ligand>
</feature>
<feature type="binding site" evidence="1">
    <location>
        <position position="14"/>
    </location>
    <ligand>
        <name>ATP</name>
        <dbReference type="ChEBI" id="CHEBI:30616"/>
    </ligand>
</feature>
<feature type="binding site" evidence="1">
    <location>
        <position position="14"/>
    </location>
    <ligand>
        <name>sn-glycerol 3-phosphate</name>
        <dbReference type="ChEBI" id="CHEBI:57597"/>
    </ligand>
</feature>
<feature type="binding site" evidence="1">
    <location>
        <position position="15"/>
    </location>
    <ligand>
        <name>ATP</name>
        <dbReference type="ChEBI" id="CHEBI:30616"/>
    </ligand>
</feature>
<feature type="binding site" evidence="1">
    <location>
        <position position="16"/>
    </location>
    <ligand>
        <name>ATP</name>
        <dbReference type="ChEBI" id="CHEBI:30616"/>
    </ligand>
</feature>
<feature type="binding site" evidence="1">
    <location>
        <position position="18"/>
    </location>
    <ligand>
        <name>ADP</name>
        <dbReference type="ChEBI" id="CHEBI:456216"/>
    </ligand>
</feature>
<feature type="binding site" evidence="1">
    <location>
        <position position="84"/>
    </location>
    <ligand>
        <name>glycerol</name>
        <dbReference type="ChEBI" id="CHEBI:17754"/>
    </ligand>
</feature>
<feature type="binding site" evidence="1">
    <location>
        <position position="84"/>
    </location>
    <ligand>
        <name>sn-glycerol 3-phosphate</name>
        <dbReference type="ChEBI" id="CHEBI:57597"/>
    </ligand>
</feature>
<feature type="binding site" evidence="1">
    <location>
        <position position="85"/>
    </location>
    <ligand>
        <name>glycerol</name>
        <dbReference type="ChEBI" id="CHEBI:17754"/>
    </ligand>
</feature>
<feature type="binding site" evidence="1">
    <location>
        <position position="85"/>
    </location>
    <ligand>
        <name>sn-glycerol 3-phosphate</name>
        <dbReference type="ChEBI" id="CHEBI:57597"/>
    </ligand>
</feature>
<feature type="binding site" evidence="1">
    <location>
        <position position="136"/>
    </location>
    <ligand>
        <name>glycerol</name>
        <dbReference type="ChEBI" id="CHEBI:17754"/>
    </ligand>
</feature>
<feature type="binding site" evidence="1">
    <location>
        <position position="136"/>
    </location>
    <ligand>
        <name>sn-glycerol 3-phosphate</name>
        <dbReference type="ChEBI" id="CHEBI:57597"/>
    </ligand>
</feature>
<feature type="binding site" evidence="1">
    <location>
        <position position="246"/>
    </location>
    <ligand>
        <name>glycerol</name>
        <dbReference type="ChEBI" id="CHEBI:17754"/>
    </ligand>
</feature>
<feature type="binding site" evidence="1">
    <location>
        <position position="246"/>
    </location>
    <ligand>
        <name>sn-glycerol 3-phosphate</name>
        <dbReference type="ChEBI" id="CHEBI:57597"/>
    </ligand>
</feature>
<feature type="binding site" evidence="1">
    <location>
        <position position="247"/>
    </location>
    <ligand>
        <name>glycerol</name>
        <dbReference type="ChEBI" id="CHEBI:17754"/>
    </ligand>
</feature>
<feature type="binding site" evidence="1">
    <location>
        <position position="268"/>
    </location>
    <ligand>
        <name>ADP</name>
        <dbReference type="ChEBI" id="CHEBI:456216"/>
    </ligand>
</feature>
<feature type="binding site" evidence="1">
    <location>
        <position position="268"/>
    </location>
    <ligand>
        <name>ATP</name>
        <dbReference type="ChEBI" id="CHEBI:30616"/>
    </ligand>
</feature>
<feature type="binding site" evidence="1">
    <location>
        <position position="311"/>
    </location>
    <ligand>
        <name>ADP</name>
        <dbReference type="ChEBI" id="CHEBI:456216"/>
    </ligand>
</feature>
<feature type="binding site" evidence="1">
    <location>
        <position position="311"/>
    </location>
    <ligand>
        <name>ATP</name>
        <dbReference type="ChEBI" id="CHEBI:30616"/>
    </ligand>
</feature>
<feature type="binding site" evidence="1">
    <location>
        <position position="315"/>
    </location>
    <ligand>
        <name>ATP</name>
        <dbReference type="ChEBI" id="CHEBI:30616"/>
    </ligand>
</feature>
<feature type="binding site" evidence="1">
    <location>
        <position position="412"/>
    </location>
    <ligand>
        <name>ADP</name>
        <dbReference type="ChEBI" id="CHEBI:456216"/>
    </ligand>
</feature>
<feature type="binding site" evidence="1">
    <location>
        <position position="412"/>
    </location>
    <ligand>
        <name>ATP</name>
        <dbReference type="ChEBI" id="CHEBI:30616"/>
    </ligand>
</feature>
<feature type="binding site" evidence="1">
    <location>
        <position position="416"/>
    </location>
    <ligand>
        <name>ADP</name>
        <dbReference type="ChEBI" id="CHEBI:456216"/>
    </ligand>
</feature>
<feature type="modified residue" description="Phosphohistidine; by HPr" evidence="1">
    <location>
        <position position="232"/>
    </location>
</feature>
<evidence type="ECO:0000255" key="1">
    <source>
        <dbReference type="HAMAP-Rule" id="MF_00186"/>
    </source>
</evidence>
<gene>
    <name evidence="1" type="primary">glpK</name>
    <name type="ordered locus">LL1246</name>
    <name type="ORF">L0014</name>
</gene>
<organism>
    <name type="scientific">Lactococcus lactis subsp. lactis (strain IL1403)</name>
    <name type="common">Streptococcus lactis</name>
    <dbReference type="NCBI Taxonomy" id="272623"/>
    <lineage>
        <taxon>Bacteria</taxon>
        <taxon>Bacillati</taxon>
        <taxon>Bacillota</taxon>
        <taxon>Bacilli</taxon>
        <taxon>Lactobacillales</taxon>
        <taxon>Streptococcaceae</taxon>
        <taxon>Lactococcus</taxon>
    </lineage>
</organism>
<comment type="function">
    <text evidence="1">Key enzyme in the regulation of glycerol uptake and metabolism. Catalyzes the phosphorylation of glycerol to yield sn-glycerol 3-phosphate.</text>
</comment>
<comment type="catalytic activity">
    <reaction evidence="1">
        <text>glycerol + ATP = sn-glycerol 3-phosphate + ADP + H(+)</text>
        <dbReference type="Rhea" id="RHEA:21644"/>
        <dbReference type="ChEBI" id="CHEBI:15378"/>
        <dbReference type="ChEBI" id="CHEBI:17754"/>
        <dbReference type="ChEBI" id="CHEBI:30616"/>
        <dbReference type="ChEBI" id="CHEBI:57597"/>
        <dbReference type="ChEBI" id="CHEBI:456216"/>
        <dbReference type="EC" id="2.7.1.30"/>
    </reaction>
</comment>
<comment type="activity regulation">
    <text evidence="1">Activated by phosphorylation and inhibited by fructose 1,6-bisphosphate (FBP).</text>
</comment>
<comment type="pathway">
    <text evidence="1">Polyol metabolism; glycerol degradation via glycerol kinase pathway; sn-glycerol 3-phosphate from glycerol: step 1/1.</text>
</comment>
<comment type="subunit">
    <text evidence="1">Homotetramer and homodimer (in equilibrium).</text>
</comment>
<comment type="PTM">
    <text evidence="1">The phosphoenolpyruvate-dependent sugar phosphotransferase system (PTS), including enzyme I, and histidine-containing protein (HPr) are required for the phosphorylation, which leads to the activation of the enzyme.</text>
</comment>
<comment type="similarity">
    <text evidence="1">Belongs to the FGGY kinase family.</text>
</comment>
<protein>
    <recommendedName>
        <fullName evidence="1">Glycerol kinase</fullName>
        <ecNumber evidence="1">2.7.1.30</ecNumber>
    </recommendedName>
    <alternativeName>
        <fullName evidence="1">ATP:glycerol 3-phosphotransferase</fullName>
    </alternativeName>
    <alternativeName>
        <fullName evidence="1">Glycerokinase</fullName>
        <shortName evidence="1">GK</shortName>
    </alternativeName>
</protein>
<accession>Q9CG64</accession>
<proteinExistence type="inferred from homology"/>
<keyword id="KW-0067">ATP-binding</keyword>
<keyword id="KW-0319">Glycerol metabolism</keyword>
<keyword id="KW-0418">Kinase</keyword>
<keyword id="KW-0547">Nucleotide-binding</keyword>
<keyword id="KW-0597">Phosphoprotein</keyword>
<keyword id="KW-1185">Reference proteome</keyword>
<keyword id="KW-0808">Transferase</keyword>
<name>GLPK_LACLA</name>
<reference key="1">
    <citation type="journal article" date="2001" name="Genome Res.">
        <title>The complete genome sequence of the lactic acid bacterium Lactococcus lactis ssp. lactis IL1403.</title>
        <authorList>
            <person name="Bolotin A."/>
            <person name="Wincker P."/>
            <person name="Mauger S."/>
            <person name="Jaillon O."/>
            <person name="Malarme K."/>
            <person name="Weissenbach J."/>
            <person name="Ehrlich S.D."/>
            <person name="Sorokin A."/>
        </authorList>
    </citation>
    <scope>NUCLEOTIDE SEQUENCE [LARGE SCALE GENOMIC DNA]</scope>
    <source>
        <strain>IL1403</strain>
    </source>
</reference>